<protein>
    <recommendedName>
        <fullName evidence="1">UPF0102 protein Sama_3355</fullName>
    </recommendedName>
</protein>
<feature type="chain" id="PRO_1000009255" description="UPF0102 protein Sama_3355">
    <location>
        <begin position="1"/>
        <end position="108"/>
    </location>
</feature>
<comment type="similarity">
    <text evidence="1">Belongs to the UPF0102 family.</text>
</comment>
<reference key="1">
    <citation type="submission" date="2006-12" db="EMBL/GenBank/DDBJ databases">
        <title>Complete sequence of Shewanella amazonensis SB2B.</title>
        <authorList>
            <consortium name="US DOE Joint Genome Institute"/>
            <person name="Copeland A."/>
            <person name="Lucas S."/>
            <person name="Lapidus A."/>
            <person name="Barry K."/>
            <person name="Detter J.C."/>
            <person name="Glavina del Rio T."/>
            <person name="Hammon N."/>
            <person name="Israni S."/>
            <person name="Dalin E."/>
            <person name="Tice H."/>
            <person name="Pitluck S."/>
            <person name="Munk A.C."/>
            <person name="Brettin T."/>
            <person name="Bruce D."/>
            <person name="Han C."/>
            <person name="Tapia R."/>
            <person name="Gilna P."/>
            <person name="Schmutz J."/>
            <person name="Larimer F."/>
            <person name="Land M."/>
            <person name="Hauser L."/>
            <person name="Kyrpides N."/>
            <person name="Mikhailova N."/>
            <person name="Fredrickson J."/>
            <person name="Richardson P."/>
        </authorList>
    </citation>
    <scope>NUCLEOTIDE SEQUENCE [LARGE SCALE GENOMIC DNA]</scope>
    <source>
        <strain>ATCC BAA-1098 / SB2B</strain>
    </source>
</reference>
<gene>
    <name type="ordered locus">Sama_3355</name>
</gene>
<dbReference type="EMBL" id="CP000507">
    <property type="protein sequence ID" value="ABM01558.1"/>
    <property type="molecule type" value="Genomic_DNA"/>
</dbReference>
<dbReference type="RefSeq" id="WP_011761462.1">
    <property type="nucleotide sequence ID" value="NC_008700.1"/>
</dbReference>
<dbReference type="SMR" id="A1SB01"/>
<dbReference type="STRING" id="326297.Sama_3355"/>
<dbReference type="KEGG" id="saz:Sama_3355"/>
<dbReference type="eggNOG" id="COG0792">
    <property type="taxonomic scope" value="Bacteria"/>
</dbReference>
<dbReference type="HOGENOM" id="CLU_115353_1_0_6"/>
<dbReference type="OrthoDB" id="9794876at2"/>
<dbReference type="Proteomes" id="UP000009175">
    <property type="component" value="Chromosome"/>
</dbReference>
<dbReference type="GO" id="GO:0003676">
    <property type="term" value="F:nucleic acid binding"/>
    <property type="evidence" value="ECO:0007669"/>
    <property type="project" value="InterPro"/>
</dbReference>
<dbReference type="Gene3D" id="3.40.1350.10">
    <property type="match status" value="1"/>
</dbReference>
<dbReference type="HAMAP" id="MF_00048">
    <property type="entry name" value="UPF0102"/>
    <property type="match status" value="1"/>
</dbReference>
<dbReference type="InterPro" id="IPR011335">
    <property type="entry name" value="Restrct_endonuc-II-like"/>
</dbReference>
<dbReference type="InterPro" id="IPR011856">
    <property type="entry name" value="tRNA_endonuc-like_dom_sf"/>
</dbReference>
<dbReference type="InterPro" id="IPR003509">
    <property type="entry name" value="UPF0102_YraN-like"/>
</dbReference>
<dbReference type="NCBIfam" id="NF009150">
    <property type="entry name" value="PRK12497.1-3"/>
    <property type="match status" value="1"/>
</dbReference>
<dbReference type="NCBIfam" id="TIGR00252">
    <property type="entry name" value="YraN family protein"/>
    <property type="match status" value="1"/>
</dbReference>
<dbReference type="PANTHER" id="PTHR34039">
    <property type="entry name" value="UPF0102 PROTEIN YRAN"/>
    <property type="match status" value="1"/>
</dbReference>
<dbReference type="PANTHER" id="PTHR34039:SF1">
    <property type="entry name" value="UPF0102 PROTEIN YRAN"/>
    <property type="match status" value="1"/>
</dbReference>
<dbReference type="Pfam" id="PF02021">
    <property type="entry name" value="UPF0102"/>
    <property type="match status" value="1"/>
</dbReference>
<dbReference type="SUPFAM" id="SSF52980">
    <property type="entry name" value="Restriction endonuclease-like"/>
    <property type="match status" value="1"/>
</dbReference>
<organism>
    <name type="scientific">Shewanella amazonensis (strain ATCC BAA-1098 / SB2B)</name>
    <dbReference type="NCBI Taxonomy" id="326297"/>
    <lineage>
        <taxon>Bacteria</taxon>
        <taxon>Pseudomonadati</taxon>
        <taxon>Pseudomonadota</taxon>
        <taxon>Gammaproteobacteria</taxon>
        <taxon>Alteromonadales</taxon>
        <taxon>Shewanellaceae</taxon>
        <taxon>Shewanella</taxon>
    </lineage>
</organism>
<accession>A1SB01</accession>
<name>Y3355_SHEAM</name>
<evidence type="ECO:0000255" key="1">
    <source>
        <dbReference type="HAMAP-Rule" id="MF_00048"/>
    </source>
</evidence>
<keyword id="KW-1185">Reference proteome</keyword>
<proteinExistence type="inferred from homology"/>
<sequence>MNPGQLAEDRAMKHLCAHGLRLEARNVRYPFGEIDLVMREGRVYVFVEVKFRTPKGFGDAVQALSAAQQQRLRRAATHYLQCHRIDAPCRFDMVAITGDKLEWIKDAF</sequence>